<protein>
    <recommendedName>
        <fullName evidence="1">Small ribosomal subunit protein uS11</fullName>
    </recommendedName>
    <alternativeName>
        <fullName evidence="2">30S ribosomal protein S11</fullName>
    </alternativeName>
</protein>
<gene>
    <name evidence="1" type="primary">rpsK</name>
    <name type="ordered locus">Mpe_A3419</name>
</gene>
<accession>A2SLD3</accession>
<comment type="function">
    <text evidence="1">Located on the platform of the 30S subunit, it bridges several disparate RNA helices of the 16S rRNA. Forms part of the Shine-Dalgarno cleft in the 70S ribosome.</text>
</comment>
<comment type="subunit">
    <text evidence="1">Part of the 30S ribosomal subunit. Interacts with proteins S7 and S18. Binds to IF-3.</text>
</comment>
<comment type="similarity">
    <text evidence="1">Belongs to the universal ribosomal protein uS11 family.</text>
</comment>
<organism>
    <name type="scientific">Methylibium petroleiphilum (strain ATCC BAA-1232 / LMG 22953 / PM1)</name>
    <dbReference type="NCBI Taxonomy" id="420662"/>
    <lineage>
        <taxon>Bacteria</taxon>
        <taxon>Pseudomonadati</taxon>
        <taxon>Pseudomonadota</taxon>
        <taxon>Betaproteobacteria</taxon>
        <taxon>Burkholderiales</taxon>
        <taxon>Sphaerotilaceae</taxon>
        <taxon>Methylibium</taxon>
    </lineage>
</organism>
<sequence>MAKAPNTAAQRVRKKVRKNVSDGVAHVHASFNNTIITITDRQGNALAWASSGGQGFKGSRKSTPFAAQVAAEVAGRAAQDQGIKNLEVEIKGPGPGRESSVRALAALGIRIVSISDVTPVPHNGCRPQKRRRI</sequence>
<proteinExistence type="inferred from homology"/>
<name>RS11_METPP</name>
<feature type="chain" id="PRO_0000294791" description="Small ribosomal subunit protein uS11">
    <location>
        <begin position="1"/>
        <end position="133"/>
    </location>
</feature>
<keyword id="KW-1185">Reference proteome</keyword>
<keyword id="KW-0687">Ribonucleoprotein</keyword>
<keyword id="KW-0689">Ribosomal protein</keyword>
<keyword id="KW-0694">RNA-binding</keyword>
<keyword id="KW-0699">rRNA-binding</keyword>
<evidence type="ECO:0000255" key="1">
    <source>
        <dbReference type="HAMAP-Rule" id="MF_01310"/>
    </source>
</evidence>
<evidence type="ECO:0000305" key="2"/>
<dbReference type="EMBL" id="CP000555">
    <property type="protein sequence ID" value="ABM96372.1"/>
    <property type="molecule type" value="Genomic_DNA"/>
</dbReference>
<dbReference type="RefSeq" id="WP_011830993.1">
    <property type="nucleotide sequence ID" value="NC_008825.1"/>
</dbReference>
<dbReference type="SMR" id="A2SLD3"/>
<dbReference type="STRING" id="420662.Mpe_A3419"/>
<dbReference type="KEGG" id="mpt:Mpe_A3419"/>
<dbReference type="eggNOG" id="COG0100">
    <property type="taxonomic scope" value="Bacteria"/>
</dbReference>
<dbReference type="HOGENOM" id="CLU_072439_5_0_4"/>
<dbReference type="Proteomes" id="UP000000366">
    <property type="component" value="Chromosome"/>
</dbReference>
<dbReference type="GO" id="GO:1990904">
    <property type="term" value="C:ribonucleoprotein complex"/>
    <property type="evidence" value="ECO:0007669"/>
    <property type="project" value="UniProtKB-KW"/>
</dbReference>
<dbReference type="GO" id="GO:0005840">
    <property type="term" value="C:ribosome"/>
    <property type="evidence" value="ECO:0007669"/>
    <property type="project" value="UniProtKB-KW"/>
</dbReference>
<dbReference type="GO" id="GO:0019843">
    <property type="term" value="F:rRNA binding"/>
    <property type="evidence" value="ECO:0007669"/>
    <property type="project" value="UniProtKB-UniRule"/>
</dbReference>
<dbReference type="GO" id="GO:0003735">
    <property type="term" value="F:structural constituent of ribosome"/>
    <property type="evidence" value="ECO:0007669"/>
    <property type="project" value="InterPro"/>
</dbReference>
<dbReference type="GO" id="GO:0006412">
    <property type="term" value="P:translation"/>
    <property type="evidence" value="ECO:0007669"/>
    <property type="project" value="UniProtKB-UniRule"/>
</dbReference>
<dbReference type="FunFam" id="3.30.420.80:FF:000001">
    <property type="entry name" value="30S ribosomal protein S11"/>
    <property type="match status" value="1"/>
</dbReference>
<dbReference type="Gene3D" id="3.30.420.80">
    <property type="entry name" value="Ribosomal protein S11"/>
    <property type="match status" value="1"/>
</dbReference>
<dbReference type="HAMAP" id="MF_01310">
    <property type="entry name" value="Ribosomal_uS11"/>
    <property type="match status" value="1"/>
</dbReference>
<dbReference type="InterPro" id="IPR001971">
    <property type="entry name" value="Ribosomal_uS11"/>
</dbReference>
<dbReference type="InterPro" id="IPR019981">
    <property type="entry name" value="Ribosomal_uS11_bac-type"/>
</dbReference>
<dbReference type="InterPro" id="IPR018102">
    <property type="entry name" value="Ribosomal_uS11_CS"/>
</dbReference>
<dbReference type="InterPro" id="IPR036967">
    <property type="entry name" value="Ribosomal_uS11_sf"/>
</dbReference>
<dbReference type="NCBIfam" id="NF003698">
    <property type="entry name" value="PRK05309.1"/>
    <property type="match status" value="1"/>
</dbReference>
<dbReference type="NCBIfam" id="TIGR03632">
    <property type="entry name" value="uS11_bact"/>
    <property type="match status" value="1"/>
</dbReference>
<dbReference type="PANTHER" id="PTHR11759">
    <property type="entry name" value="40S RIBOSOMAL PROTEIN S14/30S RIBOSOMAL PROTEIN S11"/>
    <property type="match status" value="1"/>
</dbReference>
<dbReference type="Pfam" id="PF00411">
    <property type="entry name" value="Ribosomal_S11"/>
    <property type="match status" value="1"/>
</dbReference>
<dbReference type="PIRSF" id="PIRSF002131">
    <property type="entry name" value="Ribosomal_S11"/>
    <property type="match status" value="1"/>
</dbReference>
<dbReference type="SUPFAM" id="SSF53137">
    <property type="entry name" value="Translational machinery components"/>
    <property type="match status" value="1"/>
</dbReference>
<dbReference type="PROSITE" id="PS00054">
    <property type="entry name" value="RIBOSOMAL_S11"/>
    <property type="match status" value="1"/>
</dbReference>
<reference key="1">
    <citation type="journal article" date="2007" name="J. Bacteriol.">
        <title>Whole-genome analysis of the methyl tert-butyl ether-degrading beta-proteobacterium Methylibium petroleiphilum PM1.</title>
        <authorList>
            <person name="Kane S.R."/>
            <person name="Chakicherla A.Y."/>
            <person name="Chain P.S.G."/>
            <person name="Schmidt R."/>
            <person name="Shin M.W."/>
            <person name="Legler T.C."/>
            <person name="Scow K.M."/>
            <person name="Larimer F.W."/>
            <person name="Lucas S.M."/>
            <person name="Richardson P.M."/>
            <person name="Hristova K.R."/>
        </authorList>
    </citation>
    <scope>NUCLEOTIDE SEQUENCE [LARGE SCALE GENOMIC DNA]</scope>
    <source>
        <strain>ATCC BAA-1232 / LMG 22953 / PM1</strain>
    </source>
</reference>